<feature type="chain" id="PRO_1000138645" description="D-amino acid dehydrogenase">
    <location>
        <begin position="1"/>
        <end position="428"/>
    </location>
</feature>
<feature type="binding site" evidence="1">
    <location>
        <begin position="3"/>
        <end position="17"/>
    </location>
    <ligand>
        <name>FAD</name>
        <dbReference type="ChEBI" id="CHEBI:57692"/>
    </ligand>
</feature>
<reference key="1">
    <citation type="journal article" date="2014" name="Stand. Genomic Sci.">
        <title>Complete genome sequence of Burkholderia phymatum STM815(T), a broad host range and efficient nitrogen-fixing symbiont of Mimosa species.</title>
        <authorList>
            <person name="Moulin L."/>
            <person name="Klonowska A."/>
            <person name="Caroline B."/>
            <person name="Booth K."/>
            <person name="Vriezen J.A."/>
            <person name="Melkonian R."/>
            <person name="James E.K."/>
            <person name="Young J.P."/>
            <person name="Bena G."/>
            <person name="Hauser L."/>
            <person name="Land M."/>
            <person name="Kyrpides N."/>
            <person name="Bruce D."/>
            <person name="Chain P."/>
            <person name="Copeland A."/>
            <person name="Pitluck S."/>
            <person name="Woyke T."/>
            <person name="Lizotte-Waniewski M."/>
            <person name="Bristow J."/>
            <person name="Riley M."/>
        </authorList>
    </citation>
    <scope>NUCLEOTIDE SEQUENCE [LARGE SCALE GENOMIC DNA]</scope>
    <source>
        <strain>DSM 17167 / CIP 108236 / LMG 21445 / STM815</strain>
    </source>
</reference>
<sequence>MRVVVLGSGVVGVTSAYYLARAGHEVTVIDREAGPALETSFANAGQISPGYAAPWAAPGVPLKAVKWMFQKHAPLAIRLDGTQFQLQWMWQMLQNCTSARYAVNKGRMVRLAEYSRDCLQALRAETGIQYEGRTGGTLQLFRTQQQLDGAAKDIAVLEEANVPYELLMPADLARAEPALAATSHKLTGGLRLPGDETGDCQLFTTRLAALAEQLGVKFRYNTPIDALAMEGGRIAGVKCGNEMVRADNFVVALGSYSTQFLSGLVKIPVYPLKGYSITAPIVDAKSAPVSTVLDETYKIAITRFDDRIRVGGMAEIVGFDKKLKQARRETLEMCVNDLFPGGGDTSKATFWTGLRPMTPDGTPIVGRTPVSNLFLNTGHGTLGWTMSCGSGQLLADLISGKRPAIQSGDLSVHRYLGETAGQTRPAYA</sequence>
<organism>
    <name type="scientific">Paraburkholderia phymatum (strain DSM 17167 / CIP 108236 / LMG 21445 / STM815)</name>
    <name type="common">Burkholderia phymatum</name>
    <dbReference type="NCBI Taxonomy" id="391038"/>
    <lineage>
        <taxon>Bacteria</taxon>
        <taxon>Pseudomonadati</taxon>
        <taxon>Pseudomonadota</taxon>
        <taxon>Betaproteobacteria</taxon>
        <taxon>Burkholderiales</taxon>
        <taxon>Burkholderiaceae</taxon>
        <taxon>Paraburkholderia</taxon>
    </lineage>
</organism>
<comment type="function">
    <text evidence="1">Oxidative deamination of D-amino acids.</text>
</comment>
<comment type="catalytic activity">
    <reaction evidence="1">
        <text>a D-alpha-amino acid + A + H2O = a 2-oxocarboxylate + AH2 + NH4(+)</text>
        <dbReference type="Rhea" id="RHEA:18125"/>
        <dbReference type="ChEBI" id="CHEBI:13193"/>
        <dbReference type="ChEBI" id="CHEBI:15377"/>
        <dbReference type="ChEBI" id="CHEBI:17499"/>
        <dbReference type="ChEBI" id="CHEBI:28938"/>
        <dbReference type="ChEBI" id="CHEBI:35179"/>
        <dbReference type="ChEBI" id="CHEBI:59871"/>
    </reaction>
</comment>
<comment type="cofactor">
    <cofactor evidence="1">
        <name>FAD</name>
        <dbReference type="ChEBI" id="CHEBI:57692"/>
    </cofactor>
</comment>
<comment type="pathway">
    <text>Amino-acid degradation; D-alanine degradation; NH(3) and pyruvate from D-alanine: step 1/1.</text>
</comment>
<comment type="similarity">
    <text evidence="1">Belongs to the DadA oxidoreductase family.</text>
</comment>
<name>DADA_PARP8</name>
<dbReference type="EC" id="1.4.99.-" evidence="1"/>
<dbReference type="EMBL" id="CP001043">
    <property type="protein sequence ID" value="ACC69954.1"/>
    <property type="molecule type" value="Genomic_DNA"/>
</dbReference>
<dbReference type="RefSeq" id="WP_012400174.1">
    <property type="nucleotide sequence ID" value="NC_010622.1"/>
</dbReference>
<dbReference type="SMR" id="B2JF25"/>
<dbReference type="STRING" id="391038.Bphy_0765"/>
<dbReference type="KEGG" id="bph:Bphy_0765"/>
<dbReference type="eggNOG" id="COG0665">
    <property type="taxonomic scope" value="Bacteria"/>
</dbReference>
<dbReference type="HOGENOM" id="CLU_007884_9_2_4"/>
<dbReference type="OrthoDB" id="18526at2"/>
<dbReference type="UniPathway" id="UPA00043">
    <property type="reaction ID" value="UER00498"/>
</dbReference>
<dbReference type="Proteomes" id="UP000001192">
    <property type="component" value="Chromosome 1"/>
</dbReference>
<dbReference type="GO" id="GO:0005737">
    <property type="term" value="C:cytoplasm"/>
    <property type="evidence" value="ECO:0007669"/>
    <property type="project" value="TreeGrafter"/>
</dbReference>
<dbReference type="GO" id="GO:0005886">
    <property type="term" value="C:plasma membrane"/>
    <property type="evidence" value="ECO:0007669"/>
    <property type="project" value="TreeGrafter"/>
</dbReference>
<dbReference type="GO" id="GO:0008718">
    <property type="term" value="F:D-amino-acid dehydrogenase activity"/>
    <property type="evidence" value="ECO:0007669"/>
    <property type="project" value="UniProtKB-UniRule"/>
</dbReference>
<dbReference type="GO" id="GO:0055130">
    <property type="term" value="P:D-alanine catabolic process"/>
    <property type="evidence" value="ECO:0007669"/>
    <property type="project" value="UniProtKB-UniPathway"/>
</dbReference>
<dbReference type="FunFam" id="3.50.50.60:FF:000020">
    <property type="entry name" value="D-amino acid dehydrogenase"/>
    <property type="match status" value="1"/>
</dbReference>
<dbReference type="Gene3D" id="3.30.9.10">
    <property type="entry name" value="D-Amino Acid Oxidase, subunit A, domain 2"/>
    <property type="match status" value="1"/>
</dbReference>
<dbReference type="Gene3D" id="3.50.50.60">
    <property type="entry name" value="FAD/NAD(P)-binding domain"/>
    <property type="match status" value="2"/>
</dbReference>
<dbReference type="HAMAP" id="MF_01202">
    <property type="entry name" value="DadA"/>
    <property type="match status" value="1"/>
</dbReference>
<dbReference type="InterPro" id="IPR023080">
    <property type="entry name" value="DadA"/>
</dbReference>
<dbReference type="InterPro" id="IPR006076">
    <property type="entry name" value="FAD-dep_OxRdtase"/>
</dbReference>
<dbReference type="InterPro" id="IPR036188">
    <property type="entry name" value="FAD/NAD-bd_sf"/>
</dbReference>
<dbReference type="NCBIfam" id="NF001933">
    <property type="entry name" value="PRK00711.1"/>
    <property type="match status" value="1"/>
</dbReference>
<dbReference type="PANTHER" id="PTHR13847:SF280">
    <property type="entry name" value="D-AMINO ACID DEHYDROGENASE"/>
    <property type="match status" value="1"/>
</dbReference>
<dbReference type="PANTHER" id="PTHR13847">
    <property type="entry name" value="SARCOSINE DEHYDROGENASE-RELATED"/>
    <property type="match status" value="1"/>
</dbReference>
<dbReference type="Pfam" id="PF01266">
    <property type="entry name" value="DAO"/>
    <property type="match status" value="1"/>
</dbReference>
<dbReference type="SUPFAM" id="SSF54373">
    <property type="entry name" value="FAD-linked reductases, C-terminal domain"/>
    <property type="match status" value="1"/>
</dbReference>
<dbReference type="SUPFAM" id="SSF51905">
    <property type="entry name" value="FAD/NAD(P)-binding domain"/>
    <property type="match status" value="1"/>
</dbReference>
<gene>
    <name evidence="1" type="primary">dadA</name>
    <name type="ordered locus">Bphy_0765</name>
</gene>
<proteinExistence type="inferred from homology"/>
<accession>B2JF25</accession>
<evidence type="ECO:0000255" key="1">
    <source>
        <dbReference type="HAMAP-Rule" id="MF_01202"/>
    </source>
</evidence>
<keyword id="KW-0274">FAD</keyword>
<keyword id="KW-0285">Flavoprotein</keyword>
<keyword id="KW-0560">Oxidoreductase</keyword>
<keyword id="KW-1185">Reference proteome</keyword>
<protein>
    <recommendedName>
        <fullName evidence="1">D-amino acid dehydrogenase</fullName>
        <ecNumber evidence="1">1.4.99.-</ecNumber>
    </recommendedName>
</protein>